<accession>O65100</accession>
<reference key="1">
    <citation type="journal article" date="1999" name="Biochem. J.">
        <title>Occurrence and expression of members of the ferritin gene family in cowpeas.</title>
        <authorList>
            <person name="Wardrop A.J."/>
            <person name="Wicks R.E."/>
            <person name="Entsch B."/>
        </authorList>
    </citation>
    <scope>NUCLEOTIDE SEQUENCE [MRNA]</scope>
    <source>
        <strain>cv. N41</strain>
        <tissue>Leaf</tissue>
    </source>
</reference>
<feature type="transit peptide" description="Chloroplast" evidence="2">
    <location>
        <begin position="1"/>
        <end position="54"/>
    </location>
</feature>
<feature type="chain" id="PRO_0000008871" description="Ferritin-3, chloroplastic">
    <location>
        <begin position="55"/>
        <end position="256"/>
    </location>
</feature>
<feature type="domain" description="Ferritin-like diiron" evidence="3">
    <location>
        <begin position="88"/>
        <end position="241"/>
    </location>
</feature>
<feature type="region of interest" description="Extension peptide (EP)">
    <location>
        <begin position="55"/>
        <end position="87"/>
    </location>
</feature>
<feature type="binding site" evidence="3">
    <location>
        <position position="105"/>
    </location>
    <ligand>
        <name>Fe cation</name>
        <dbReference type="ChEBI" id="CHEBI:24875"/>
        <label>1</label>
    </ligand>
</feature>
<feature type="binding site" evidence="3">
    <location>
        <position position="140"/>
    </location>
    <ligand>
        <name>Fe cation</name>
        <dbReference type="ChEBI" id="CHEBI:24875"/>
        <label>1</label>
    </ligand>
</feature>
<feature type="binding site" evidence="3">
    <location>
        <position position="140"/>
    </location>
    <ligand>
        <name>Fe cation</name>
        <dbReference type="ChEBI" id="CHEBI:24875"/>
        <label>2</label>
    </ligand>
</feature>
<feature type="binding site" evidence="3">
    <location>
        <position position="143"/>
    </location>
    <ligand>
        <name>Fe cation</name>
        <dbReference type="ChEBI" id="CHEBI:24875"/>
        <label>1</label>
    </ligand>
</feature>
<feature type="binding site" evidence="3">
    <location>
        <position position="189"/>
    </location>
    <ligand>
        <name>Fe cation</name>
        <dbReference type="ChEBI" id="CHEBI:24875"/>
        <label>2</label>
    </ligand>
</feature>
<feature type="binding site" evidence="3">
    <location>
        <position position="223"/>
    </location>
    <ligand>
        <name>Fe cation</name>
        <dbReference type="ChEBI" id="CHEBI:24875"/>
        <label>2</label>
    </ligand>
</feature>
<evidence type="ECO:0000250" key="1"/>
<evidence type="ECO:0000255" key="2"/>
<evidence type="ECO:0000255" key="3">
    <source>
        <dbReference type="PROSITE-ProRule" id="PRU00085"/>
    </source>
</evidence>
<evidence type="ECO:0000305" key="4"/>
<proteinExistence type="evidence at transcript level"/>
<sequence>MALSCSKVLTFSLSSVVGGDDAKKKLSLCSSSSLSASVNGGGSRNMRVCAAASNAPAPLTGVIFEPFQELKKDYLAVPIAPNVSLSRQNYSDEAEAAINEQINVEYNVSYVYHSLFAYFDRDNIALKGLAKFFKESSEEEREHAEKLIKYQNIRGGRVVLHPITSPPSEFEHPEKGDALYAMELALSLEKLTNEKLLYVHSVADRNNDAQLADFIESEFLNEQVESIKKIAEYVTQLRLVGKGHGVWHFDQRLLHD</sequence>
<name>FRI3_VIGUN</name>
<protein>
    <recommendedName>
        <fullName>Ferritin-3, chloroplastic</fullName>
        <ecNumber>1.16.3.1</ecNumber>
    </recommendedName>
</protein>
<organism>
    <name type="scientific">Vigna unguiculata</name>
    <name type="common">Cowpea</name>
    <dbReference type="NCBI Taxonomy" id="3917"/>
    <lineage>
        <taxon>Eukaryota</taxon>
        <taxon>Viridiplantae</taxon>
        <taxon>Streptophyta</taxon>
        <taxon>Embryophyta</taxon>
        <taxon>Tracheophyta</taxon>
        <taxon>Spermatophyta</taxon>
        <taxon>Magnoliopsida</taxon>
        <taxon>eudicotyledons</taxon>
        <taxon>Gunneridae</taxon>
        <taxon>Pentapetalae</taxon>
        <taxon>rosids</taxon>
        <taxon>fabids</taxon>
        <taxon>Fabales</taxon>
        <taxon>Fabaceae</taxon>
        <taxon>Papilionoideae</taxon>
        <taxon>50 kb inversion clade</taxon>
        <taxon>NPAAA clade</taxon>
        <taxon>indigoferoid/millettioid clade</taxon>
        <taxon>Phaseoleae</taxon>
        <taxon>Vigna</taxon>
    </lineage>
</organism>
<comment type="function">
    <text evidence="1">Stores iron in a soluble, non-toxic, readily available form. Important for iron homeostasis. Has ferroxidase activity. Iron is taken up in the ferrous form and deposited as ferric hydroxides after oxidation (By similarity).</text>
</comment>
<comment type="catalytic activity">
    <reaction>
        <text>4 Fe(2+) + O2 + 4 H(+) = 4 Fe(3+) + 2 H2O</text>
        <dbReference type="Rhea" id="RHEA:11148"/>
        <dbReference type="ChEBI" id="CHEBI:15377"/>
        <dbReference type="ChEBI" id="CHEBI:15378"/>
        <dbReference type="ChEBI" id="CHEBI:15379"/>
        <dbReference type="ChEBI" id="CHEBI:29033"/>
        <dbReference type="ChEBI" id="CHEBI:29034"/>
        <dbReference type="EC" id="1.16.3.1"/>
    </reaction>
</comment>
<comment type="subunit">
    <text evidence="1">Oligomer of 24 subunits. There are two types of subunits: L (light) chain and H (heavy) chain. The major chain can be light or heavy, depending on the species and tissue type. The functional molecule forms a roughly spherical shell with a diameter of 12 nm and contains a central cavity into which the insoluble mineral iron core is deposited (By similarity).</text>
</comment>
<comment type="subcellular location">
    <subcellularLocation>
        <location evidence="1">Plastid</location>
        <location evidence="1">Chloroplast</location>
    </subcellularLocation>
</comment>
<comment type="similarity">
    <text evidence="4">Belongs to the ferritin family.</text>
</comment>
<keyword id="KW-0150">Chloroplast</keyword>
<keyword id="KW-0408">Iron</keyword>
<keyword id="KW-0409">Iron storage</keyword>
<keyword id="KW-0479">Metal-binding</keyword>
<keyword id="KW-0560">Oxidoreductase</keyword>
<keyword id="KW-0934">Plastid</keyword>
<keyword id="KW-0809">Transit peptide</keyword>
<dbReference type="EC" id="1.16.3.1"/>
<dbReference type="EMBL" id="AF052057">
    <property type="protein sequence ID" value="AAC06026.1"/>
    <property type="molecule type" value="mRNA"/>
</dbReference>
<dbReference type="PIR" id="T08123">
    <property type="entry name" value="T08123"/>
</dbReference>
<dbReference type="SMR" id="O65100"/>
<dbReference type="GO" id="GO:0009507">
    <property type="term" value="C:chloroplast"/>
    <property type="evidence" value="ECO:0007669"/>
    <property type="project" value="UniProtKB-SubCell"/>
</dbReference>
<dbReference type="GO" id="GO:0008199">
    <property type="term" value="F:ferric iron binding"/>
    <property type="evidence" value="ECO:0007669"/>
    <property type="project" value="InterPro"/>
</dbReference>
<dbReference type="GO" id="GO:0008198">
    <property type="term" value="F:ferrous iron binding"/>
    <property type="evidence" value="ECO:0007669"/>
    <property type="project" value="TreeGrafter"/>
</dbReference>
<dbReference type="GO" id="GO:0004322">
    <property type="term" value="F:ferroxidase activity"/>
    <property type="evidence" value="ECO:0007669"/>
    <property type="project" value="UniProtKB-EC"/>
</dbReference>
<dbReference type="GO" id="GO:0006879">
    <property type="term" value="P:intracellular iron ion homeostasis"/>
    <property type="evidence" value="ECO:0007669"/>
    <property type="project" value="UniProtKB-KW"/>
</dbReference>
<dbReference type="GO" id="GO:0006826">
    <property type="term" value="P:iron ion transport"/>
    <property type="evidence" value="ECO:0007669"/>
    <property type="project" value="InterPro"/>
</dbReference>
<dbReference type="CDD" id="cd01056">
    <property type="entry name" value="Euk_Ferritin"/>
    <property type="match status" value="1"/>
</dbReference>
<dbReference type="FunFam" id="1.20.1260.10:FF:000006">
    <property type="entry name" value="Ferritin"/>
    <property type="match status" value="1"/>
</dbReference>
<dbReference type="Gene3D" id="1.20.1260.10">
    <property type="match status" value="1"/>
</dbReference>
<dbReference type="InterPro" id="IPR001519">
    <property type="entry name" value="Ferritin"/>
</dbReference>
<dbReference type="InterPro" id="IPR012347">
    <property type="entry name" value="Ferritin-like"/>
</dbReference>
<dbReference type="InterPro" id="IPR009040">
    <property type="entry name" value="Ferritin-like_diiron"/>
</dbReference>
<dbReference type="InterPro" id="IPR009078">
    <property type="entry name" value="Ferritin-like_SF"/>
</dbReference>
<dbReference type="InterPro" id="IPR014034">
    <property type="entry name" value="Ferritin_CS"/>
</dbReference>
<dbReference type="InterPro" id="IPR008331">
    <property type="entry name" value="Ferritin_DPS_dom"/>
</dbReference>
<dbReference type="PANTHER" id="PTHR11431">
    <property type="entry name" value="FERRITIN"/>
    <property type="match status" value="1"/>
</dbReference>
<dbReference type="PANTHER" id="PTHR11431:SF101">
    <property type="entry name" value="FERRITIN-2, CHLOROPLASTIC"/>
    <property type="match status" value="1"/>
</dbReference>
<dbReference type="Pfam" id="PF00210">
    <property type="entry name" value="Ferritin"/>
    <property type="match status" value="1"/>
</dbReference>
<dbReference type="SUPFAM" id="SSF47240">
    <property type="entry name" value="Ferritin-like"/>
    <property type="match status" value="1"/>
</dbReference>
<dbReference type="PROSITE" id="PS00540">
    <property type="entry name" value="FERRITIN_1"/>
    <property type="match status" value="1"/>
</dbReference>
<dbReference type="PROSITE" id="PS00204">
    <property type="entry name" value="FERRITIN_2"/>
    <property type="match status" value="1"/>
</dbReference>
<dbReference type="PROSITE" id="PS50905">
    <property type="entry name" value="FERRITIN_LIKE"/>
    <property type="match status" value="1"/>
</dbReference>